<gene>
    <name type="primary">SMT1</name>
    <name type="synonym">CPH</name>
    <name type="ordered locus">At5g13710</name>
    <name type="ORF">MSH12.18</name>
</gene>
<evidence type="ECO:0000255" key="1">
    <source>
        <dbReference type="PROSITE-ProRule" id="PRU01022"/>
    </source>
</evidence>
<evidence type="ECO:0000269" key="2">
    <source>
    </source>
</evidence>
<evidence type="ECO:0000305" key="3"/>
<evidence type="ECO:0000305" key="4">
    <source>
    </source>
</evidence>
<evidence type="ECO:0007744" key="5">
    <source>
    </source>
</evidence>
<keyword id="KW-0007">Acetylation</keyword>
<keyword id="KW-0444">Lipid biosynthesis</keyword>
<keyword id="KW-0443">Lipid metabolism</keyword>
<keyword id="KW-0489">Methyltransferase</keyword>
<keyword id="KW-1185">Reference proteome</keyword>
<keyword id="KW-0949">S-adenosyl-L-methionine</keyword>
<keyword id="KW-0752">Steroid biosynthesis</keyword>
<keyword id="KW-0753">Steroid metabolism</keyword>
<keyword id="KW-0756">Sterol biosynthesis</keyword>
<keyword id="KW-1207">Sterol metabolism</keyword>
<keyword id="KW-0808">Transferase</keyword>
<proteinExistence type="evidence at protein level"/>
<dbReference type="EC" id="2.1.1.41" evidence="2"/>
<dbReference type="EMBL" id="AF090372">
    <property type="protein sequence ID" value="AAF78847.1"/>
    <property type="molecule type" value="mRNA"/>
</dbReference>
<dbReference type="EMBL" id="AF195648">
    <property type="protein sequence ID" value="AAG28462.1"/>
    <property type="molecule type" value="mRNA"/>
</dbReference>
<dbReference type="EMBL" id="AF494289">
    <property type="protein sequence ID" value="AAM53553.1"/>
    <property type="molecule type" value="mRNA"/>
</dbReference>
<dbReference type="EMBL" id="AB006704">
    <property type="protein sequence ID" value="BAB08698.1"/>
    <property type="molecule type" value="Genomic_DNA"/>
</dbReference>
<dbReference type="EMBL" id="CP002688">
    <property type="protein sequence ID" value="AED91930.1"/>
    <property type="molecule type" value="Genomic_DNA"/>
</dbReference>
<dbReference type="EMBL" id="CP002688">
    <property type="protein sequence ID" value="AED91931.1"/>
    <property type="molecule type" value="Genomic_DNA"/>
</dbReference>
<dbReference type="EMBL" id="AY120716">
    <property type="protein sequence ID" value="AAM53274.1"/>
    <property type="molecule type" value="mRNA"/>
</dbReference>
<dbReference type="EMBL" id="BT000058">
    <property type="protein sequence ID" value="AAN15377.1"/>
    <property type="molecule type" value="mRNA"/>
</dbReference>
<dbReference type="RefSeq" id="NP_001078579.1">
    <property type="nucleotide sequence ID" value="NM_001085110.1"/>
</dbReference>
<dbReference type="RefSeq" id="NP_196875.1">
    <property type="nucleotide sequence ID" value="NM_121374.4"/>
</dbReference>
<dbReference type="SMR" id="Q9LM02"/>
<dbReference type="BioGRID" id="16494">
    <property type="interactions" value="2"/>
</dbReference>
<dbReference type="FunCoup" id="Q9LM02">
    <property type="interactions" value="2074"/>
</dbReference>
<dbReference type="STRING" id="3702.Q9LM02"/>
<dbReference type="BindingDB" id="Q9LM02"/>
<dbReference type="ChEMBL" id="CHEMBL4264"/>
<dbReference type="iPTMnet" id="Q9LM02"/>
<dbReference type="PaxDb" id="3702-AT5G13710.1"/>
<dbReference type="ProteomicsDB" id="232661"/>
<dbReference type="DNASU" id="831216"/>
<dbReference type="EnsemblPlants" id="AT5G13710.1">
    <property type="protein sequence ID" value="AT5G13710.1"/>
    <property type="gene ID" value="AT5G13710"/>
</dbReference>
<dbReference type="EnsemblPlants" id="AT5G13710.2">
    <property type="protein sequence ID" value="AT5G13710.2"/>
    <property type="gene ID" value="AT5G13710"/>
</dbReference>
<dbReference type="GeneID" id="831216"/>
<dbReference type="Gramene" id="AT5G13710.1">
    <property type="protein sequence ID" value="AT5G13710.1"/>
    <property type="gene ID" value="AT5G13710"/>
</dbReference>
<dbReference type="Gramene" id="AT5G13710.2">
    <property type="protein sequence ID" value="AT5G13710.2"/>
    <property type="gene ID" value="AT5G13710"/>
</dbReference>
<dbReference type="KEGG" id="ath:AT5G13710"/>
<dbReference type="Araport" id="AT5G13710"/>
<dbReference type="TAIR" id="AT5G13710">
    <property type="gene designation" value="SMT1"/>
</dbReference>
<dbReference type="eggNOG" id="KOG1269">
    <property type="taxonomic scope" value="Eukaryota"/>
</dbReference>
<dbReference type="HOGENOM" id="CLU_039068_5_0_1"/>
<dbReference type="InParanoid" id="Q9LM02"/>
<dbReference type="OMA" id="AFNKAMH"/>
<dbReference type="PhylomeDB" id="Q9LM02"/>
<dbReference type="BioCyc" id="ARA:AT5G13710-MONOMER"/>
<dbReference type="BioCyc" id="MetaCyc:AT5G13710-MONOMER"/>
<dbReference type="BRENDA" id="2.1.1.142">
    <property type="organism ID" value="399"/>
</dbReference>
<dbReference type="UniPathway" id="UPA00766"/>
<dbReference type="PRO" id="PR:Q9LM02"/>
<dbReference type="Proteomes" id="UP000006548">
    <property type="component" value="Chromosome 5"/>
</dbReference>
<dbReference type="ExpressionAtlas" id="Q9LM02">
    <property type="expression patterns" value="baseline and differential"/>
</dbReference>
<dbReference type="GO" id="GO:0005783">
    <property type="term" value="C:endoplasmic reticulum"/>
    <property type="evidence" value="ECO:0007005"/>
    <property type="project" value="TAIR"/>
</dbReference>
<dbReference type="GO" id="GO:0000325">
    <property type="term" value="C:plant-type vacuole"/>
    <property type="evidence" value="ECO:0007005"/>
    <property type="project" value="TAIR"/>
</dbReference>
<dbReference type="GO" id="GO:0009506">
    <property type="term" value="C:plasmodesma"/>
    <property type="evidence" value="ECO:0007005"/>
    <property type="project" value="TAIR"/>
</dbReference>
<dbReference type="GO" id="GO:0009536">
    <property type="term" value="C:plastid"/>
    <property type="evidence" value="ECO:0007005"/>
    <property type="project" value="TAIR"/>
</dbReference>
<dbReference type="GO" id="GO:0003838">
    <property type="term" value="F:sterol 24-C-methyltransferase activity"/>
    <property type="evidence" value="ECO:0000314"/>
    <property type="project" value="TAIR"/>
</dbReference>
<dbReference type="GO" id="GO:0009793">
    <property type="term" value="P:embryo development ending in seed dormancy"/>
    <property type="evidence" value="ECO:0000315"/>
    <property type="project" value="TAIR"/>
</dbReference>
<dbReference type="GO" id="GO:0032259">
    <property type="term" value="P:methylation"/>
    <property type="evidence" value="ECO:0007669"/>
    <property type="project" value="UniProtKB-KW"/>
</dbReference>
<dbReference type="GO" id="GO:0016126">
    <property type="term" value="P:sterol biosynthetic process"/>
    <property type="evidence" value="ECO:0000315"/>
    <property type="project" value="TAIR"/>
</dbReference>
<dbReference type="CDD" id="cd02440">
    <property type="entry name" value="AdoMet_MTases"/>
    <property type="match status" value="1"/>
</dbReference>
<dbReference type="FunFam" id="3.40.50.150:FF:000161">
    <property type="entry name" value="Methyltransferase"/>
    <property type="match status" value="1"/>
</dbReference>
<dbReference type="Gene3D" id="3.40.50.150">
    <property type="entry name" value="Vaccinia Virus protein VP39"/>
    <property type="match status" value="1"/>
</dbReference>
<dbReference type="InterPro" id="IPR050447">
    <property type="entry name" value="Erg6_SMT_methyltransf"/>
</dbReference>
<dbReference type="InterPro" id="IPR013216">
    <property type="entry name" value="Methyltransf_11"/>
</dbReference>
<dbReference type="InterPro" id="IPR030384">
    <property type="entry name" value="MeTrfase_SMT"/>
</dbReference>
<dbReference type="InterPro" id="IPR029063">
    <property type="entry name" value="SAM-dependent_MTases_sf"/>
</dbReference>
<dbReference type="InterPro" id="IPR013705">
    <property type="entry name" value="Sterol_MeTrfase_C"/>
</dbReference>
<dbReference type="PANTHER" id="PTHR44068:SF1">
    <property type="entry name" value="HYPOTHETICAL LOC100005854"/>
    <property type="match status" value="1"/>
</dbReference>
<dbReference type="PANTHER" id="PTHR44068">
    <property type="entry name" value="ZGC:194242"/>
    <property type="match status" value="1"/>
</dbReference>
<dbReference type="Pfam" id="PF08241">
    <property type="entry name" value="Methyltransf_11"/>
    <property type="match status" value="1"/>
</dbReference>
<dbReference type="Pfam" id="PF08498">
    <property type="entry name" value="Sterol_MT_C"/>
    <property type="match status" value="1"/>
</dbReference>
<dbReference type="SUPFAM" id="SSF53335">
    <property type="entry name" value="S-adenosyl-L-methionine-dependent methyltransferases"/>
    <property type="match status" value="1"/>
</dbReference>
<dbReference type="PROSITE" id="PS51685">
    <property type="entry name" value="SAM_MT_ERG6_SMT"/>
    <property type="match status" value="1"/>
</dbReference>
<name>SMT1_ARATH</name>
<accession>Q9LM02</accession>
<accession>Q8LKW1</accession>
<comment type="function">
    <text evidence="2">Catalyzes the methyl transfer from S-adenosyl-methionine to the C-24 of cycloartenol to form 24-methylene cycloartenol.</text>
</comment>
<comment type="catalytic activity">
    <reaction evidence="2">
        <text>cycloartenol + S-adenosyl-L-methionine = 24-methylenecycloartanol + S-adenosyl-L-homocysteine + H(+)</text>
        <dbReference type="Rhea" id="RHEA:59012"/>
        <dbReference type="ChEBI" id="CHEBI:1307"/>
        <dbReference type="ChEBI" id="CHEBI:15378"/>
        <dbReference type="ChEBI" id="CHEBI:17030"/>
        <dbReference type="ChEBI" id="CHEBI:57856"/>
        <dbReference type="ChEBI" id="CHEBI:59789"/>
        <dbReference type="EC" id="2.1.1.41"/>
    </reaction>
    <physiologicalReaction direction="left-to-right" evidence="4">
        <dbReference type="Rhea" id="RHEA:59013"/>
    </physiologicalReaction>
</comment>
<comment type="biophysicochemical properties">
    <kinetics>
        <KM evidence="2">42 uM for cycloartenol</KM>
        <Vmax evidence="2">5.2 pmol/min/mg enzyme with cycloartenol as substrate</Vmax>
    </kinetics>
</comment>
<comment type="pathway">
    <text evidence="4">Steroid biosynthesis; sterol biosynthesis.</text>
</comment>
<comment type="tissue specificity">
    <text>Highly expressed in vascular tissue, mature leaves and in regions undergoing cellular expansion.</text>
</comment>
<comment type="similarity">
    <text evidence="1">Belongs to the class I-like SAM-binding methyltransferase superfamily. Erg6/SMT family.</text>
</comment>
<protein>
    <recommendedName>
        <fullName>Cycloartenol-C-24-methyltransferase</fullName>
        <ecNumber evidence="2">2.1.1.41</ecNumber>
    </recommendedName>
    <alternativeName>
        <fullName>24-sterol C-methyltransferase 1</fullName>
        <shortName>Sterol C-methyltransferase 1</shortName>
    </alternativeName>
    <alternativeName>
        <fullName>Protein CEPHALOPOD</fullName>
    </alternativeName>
    <alternativeName>
        <fullName>Protein STEROL METHYLTRANSFERASE 1</fullName>
    </alternativeName>
</protein>
<organism>
    <name type="scientific">Arabidopsis thaliana</name>
    <name type="common">Mouse-ear cress</name>
    <dbReference type="NCBI Taxonomy" id="3702"/>
    <lineage>
        <taxon>Eukaryota</taxon>
        <taxon>Viridiplantae</taxon>
        <taxon>Streptophyta</taxon>
        <taxon>Embryophyta</taxon>
        <taxon>Tracheophyta</taxon>
        <taxon>Spermatophyta</taxon>
        <taxon>Magnoliopsida</taxon>
        <taxon>eudicotyledons</taxon>
        <taxon>Gunneridae</taxon>
        <taxon>Pentapetalae</taxon>
        <taxon>rosids</taxon>
        <taxon>malvids</taxon>
        <taxon>Brassicales</taxon>
        <taxon>Brassicaceae</taxon>
        <taxon>Camelineae</taxon>
        <taxon>Arabidopsis</taxon>
    </lineage>
</organism>
<reference key="1">
    <citation type="submission" date="1998-09" db="EMBL/GenBank/DDBJ databases">
        <authorList>
            <person name="Schaeffer A."/>
            <person name="Schaller H."/>
            <person name="Benveniste P."/>
        </authorList>
    </citation>
    <scope>NUCLEOTIDE SEQUENCE [MRNA]</scope>
    <source>
        <strain>cv. Columbia</strain>
    </source>
</reference>
<reference key="2">
    <citation type="journal article" date="2000" name="Plant Cell">
        <title>Sterol methyltransferase 1 controls the level of cholesterol in plants.</title>
        <authorList>
            <person name="Diener A.C."/>
            <person name="Li H."/>
            <person name="Zhou W.-X."/>
            <person name="Whoriskey W.J."/>
            <person name="Nes W.D."/>
            <person name="Fink G.R."/>
        </authorList>
    </citation>
    <scope>NUCLEOTIDE SEQUENCE [MRNA]</scope>
    <scope>FUNCTION</scope>
    <scope>CATALYTIC ACTIVITY</scope>
    <scope>BIOPHYSICOCHEMICAL PROPERTIES</scope>
    <source>
        <strain>cv. Columbia</strain>
    </source>
</reference>
<reference key="3">
    <citation type="journal article" date="2002" name="Plant J.">
        <title>Interactions between sterol biosynthesis genes in embryonic development of Arabidopsis.</title>
        <authorList>
            <person name="Schrick K."/>
            <person name="Mayer U."/>
            <person name="Martin G."/>
            <person name="Bellini C."/>
            <person name="Kuhnt C."/>
            <person name="Schmidt J."/>
            <person name="Juergens G."/>
        </authorList>
    </citation>
    <scope>NUCLEOTIDE SEQUENCE [MRNA]</scope>
    <source>
        <strain>cv. Landsberg erecta</strain>
    </source>
</reference>
<reference key="4">
    <citation type="journal article" date="1997" name="DNA Res.">
        <title>Structural analysis of Arabidopsis thaliana chromosome 5. II. Sequence features of the regions of 1,044,062 bp covered by thirteen physically assigned P1 clones.</title>
        <authorList>
            <person name="Kotani H."/>
            <person name="Nakamura Y."/>
            <person name="Sato S."/>
            <person name="Kaneko T."/>
            <person name="Asamizu E."/>
            <person name="Miyajima N."/>
            <person name="Tabata S."/>
        </authorList>
    </citation>
    <scope>NUCLEOTIDE SEQUENCE [LARGE SCALE GENOMIC DNA]</scope>
    <source>
        <strain>cv. Columbia</strain>
    </source>
</reference>
<reference key="5">
    <citation type="journal article" date="2017" name="Plant J.">
        <title>Araport11: a complete reannotation of the Arabidopsis thaliana reference genome.</title>
        <authorList>
            <person name="Cheng C.Y."/>
            <person name="Krishnakumar V."/>
            <person name="Chan A.P."/>
            <person name="Thibaud-Nissen F."/>
            <person name="Schobel S."/>
            <person name="Town C.D."/>
        </authorList>
    </citation>
    <scope>GENOME REANNOTATION</scope>
    <source>
        <strain>cv. Columbia</strain>
    </source>
</reference>
<reference key="6">
    <citation type="journal article" date="2003" name="Science">
        <title>Empirical analysis of transcriptional activity in the Arabidopsis genome.</title>
        <authorList>
            <person name="Yamada K."/>
            <person name="Lim J."/>
            <person name="Dale J.M."/>
            <person name="Chen H."/>
            <person name="Shinn P."/>
            <person name="Palm C.J."/>
            <person name="Southwick A.M."/>
            <person name="Wu H.C."/>
            <person name="Kim C.J."/>
            <person name="Nguyen M."/>
            <person name="Pham P.K."/>
            <person name="Cheuk R.F."/>
            <person name="Karlin-Newmann G."/>
            <person name="Liu S.X."/>
            <person name="Lam B."/>
            <person name="Sakano H."/>
            <person name="Wu T."/>
            <person name="Yu G."/>
            <person name="Miranda M."/>
            <person name="Quach H.L."/>
            <person name="Tripp M."/>
            <person name="Chang C.H."/>
            <person name="Lee J.M."/>
            <person name="Toriumi M.J."/>
            <person name="Chan M.M."/>
            <person name="Tang C.C."/>
            <person name="Onodera C.S."/>
            <person name="Deng J.M."/>
            <person name="Akiyama K."/>
            <person name="Ansari Y."/>
            <person name="Arakawa T."/>
            <person name="Banh J."/>
            <person name="Banno F."/>
            <person name="Bowser L."/>
            <person name="Brooks S.Y."/>
            <person name="Carninci P."/>
            <person name="Chao Q."/>
            <person name="Choy N."/>
            <person name="Enju A."/>
            <person name="Goldsmith A.D."/>
            <person name="Gurjal M."/>
            <person name="Hansen N.F."/>
            <person name="Hayashizaki Y."/>
            <person name="Johnson-Hopson C."/>
            <person name="Hsuan V.W."/>
            <person name="Iida K."/>
            <person name="Karnes M."/>
            <person name="Khan S."/>
            <person name="Koesema E."/>
            <person name="Ishida J."/>
            <person name="Jiang P.X."/>
            <person name="Jones T."/>
            <person name="Kawai J."/>
            <person name="Kamiya A."/>
            <person name="Meyers C."/>
            <person name="Nakajima M."/>
            <person name="Narusaka M."/>
            <person name="Seki M."/>
            <person name="Sakurai T."/>
            <person name="Satou M."/>
            <person name="Tamse R."/>
            <person name="Vaysberg M."/>
            <person name="Wallender E.K."/>
            <person name="Wong C."/>
            <person name="Yamamura Y."/>
            <person name="Yuan S."/>
            <person name="Shinozaki K."/>
            <person name="Davis R.W."/>
            <person name="Theologis A."/>
            <person name="Ecker J.R."/>
        </authorList>
    </citation>
    <scope>NUCLEOTIDE SEQUENCE [LARGE SCALE MRNA]</scope>
    <source>
        <strain>cv. Columbia</strain>
    </source>
</reference>
<reference key="7">
    <citation type="journal article" date="2012" name="Mol. Cell. Proteomics">
        <title>Comparative large-scale characterisation of plant vs. mammal proteins reveals similar and idiosyncratic N-alpha acetylation features.</title>
        <authorList>
            <person name="Bienvenut W.V."/>
            <person name="Sumpton D."/>
            <person name="Martinez A."/>
            <person name="Lilla S."/>
            <person name="Espagne C."/>
            <person name="Meinnel T."/>
            <person name="Giglione C."/>
        </authorList>
    </citation>
    <scope>ACETYLATION [LARGE SCALE ANALYSIS] AT MET-1</scope>
    <scope>IDENTIFICATION BY MASS SPECTROMETRY [LARGE SCALE ANALYSIS]</scope>
</reference>
<sequence>MDLASNLGGKIDKSDVLTAVEKYEQYHVFHGGNEEERKANYTDMVNKYYDLATSFYEYGWGESFHFAQRWKGESLRESIKRHEHFLALQLGIQPGQKVLDVGCGIGGPLREIARFSNSVVTGLNNNEYQITRGKELNRLAGVDKTCNFVKADFMKMPFPENSFDAVYAIEATCHAPDAYGCYKEIYRVLKPGQCFAAYEWCMTDAFDPDNAEHQKIKGEIEIGDGLPDIRLTTKCLEALKQAGFEVIWEKDLAKDSPVPWYLPLDKNHFSLSSFRLTAVGRFITKNMVKILEYIRLAPQGSQRVSNFLEQAAEGLVDGGRREIFTPMYFFLARKPE</sequence>
<feature type="chain" id="PRO_0000124800" description="Cycloartenol-C-24-methyltransferase">
    <location>
        <begin position="1"/>
        <end position="336"/>
    </location>
</feature>
<feature type="modified residue" description="N-acetylmethionine" evidence="5">
    <location>
        <position position="1"/>
    </location>
</feature>
<feature type="sequence conflict" description="In Ref. 3; AAM53553." evidence="3" ref="3">
    <original>V</original>
    <variation>A</variation>
    <location>
        <position position="119"/>
    </location>
</feature>
<feature type="sequence conflict" description="In Ref. 3; AAM53553." evidence="3" ref="3">
    <original>S</original>
    <variation>N</variation>
    <location>
        <position position="162"/>
    </location>
</feature>